<protein>
    <recommendedName>
        <fullName evidence="1">Protein TusB</fullName>
    </recommendedName>
    <alternativeName>
        <fullName evidence="1">tRNA 2-thiouridine synthesizing protein B</fullName>
    </alternativeName>
</protein>
<dbReference type="EMBL" id="AE016826">
    <property type="protein sequence ID" value="AAO27179.1"/>
    <property type="molecule type" value="Genomic_DNA"/>
</dbReference>
<dbReference type="RefSeq" id="WP_011091580.1">
    <property type="nucleotide sequence ID" value="NC_004545.1"/>
</dbReference>
<dbReference type="SMR" id="Q89A64"/>
<dbReference type="STRING" id="224915.bbp_473"/>
<dbReference type="KEGG" id="bab:bbp_473"/>
<dbReference type="eggNOG" id="COG2168">
    <property type="taxonomic scope" value="Bacteria"/>
</dbReference>
<dbReference type="HOGENOM" id="CLU_166087_2_1_6"/>
<dbReference type="OrthoDB" id="9795117at2"/>
<dbReference type="Proteomes" id="UP000000601">
    <property type="component" value="Chromosome"/>
</dbReference>
<dbReference type="GO" id="GO:1990228">
    <property type="term" value="C:sulfurtransferase complex"/>
    <property type="evidence" value="ECO:0007669"/>
    <property type="project" value="TreeGrafter"/>
</dbReference>
<dbReference type="GO" id="GO:0002143">
    <property type="term" value="P:tRNA wobble position uridine thiolation"/>
    <property type="evidence" value="ECO:0007669"/>
    <property type="project" value="InterPro"/>
</dbReference>
<dbReference type="Gene3D" id="3.40.1260.10">
    <property type="entry name" value="DsrEFH-like"/>
    <property type="match status" value="1"/>
</dbReference>
<dbReference type="HAMAP" id="MF_01564">
    <property type="entry name" value="Thiourid_synth_B"/>
    <property type="match status" value="1"/>
</dbReference>
<dbReference type="InterPro" id="IPR027396">
    <property type="entry name" value="DsrEFH-like"/>
</dbReference>
<dbReference type="InterPro" id="IPR023526">
    <property type="entry name" value="Sulphur_relay_TusB"/>
</dbReference>
<dbReference type="InterPro" id="IPR007215">
    <property type="entry name" value="Sulphur_relay_TusB/DsrH"/>
</dbReference>
<dbReference type="NCBIfam" id="NF010035">
    <property type="entry name" value="PRK13510.1"/>
    <property type="match status" value="1"/>
</dbReference>
<dbReference type="NCBIfam" id="TIGR03011">
    <property type="entry name" value="sulf_tusB_dsrH"/>
    <property type="match status" value="1"/>
</dbReference>
<dbReference type="PANTHER" id="PTHR37526">
    <property type="entry name" value="PROTEIN TUSB"/>
    <property type="match status" value="1"/>
</dbReference>
<dbReference type="PANTHER" id="PTHR37526:SF1">
    <property type="entry name" value="PROTEIN TUSB"/>
    <property type="match status" value="1"/>
</dbReference>
<dbReference type="Pfam" id="PF04077">
    <property type="entry name" value="DsrH"/>
    <property type="match status" value="1"/>
</dbReference>
<dbReference type="SUPFAM" id="SSF75169">
    <property type="entry name" value="DsrEFH-like"/>
    <property type="match status" value="1"/>
</dbReference>
<gene>
    <name evidence="1" type="primary">tusB</name>
    <name type="ordered locus">bbp_473</name>
</gene>
<evidence type="ECO:0000255" key="1">
    <source>
        <dbReference type="HAMAP-Rule" id="MF_01564"/>
    </source>
</evidence>
<proteinExistence type="inferred from homology"/>
<name>TUSB_BUCBP</name>
<accession>Q89A64</accession>
<comment type="function">
    <text evidence="1">Part of a sulfur-relay system required for 2-thiolation of 5-methylaminomethyl-2-thiouridine (mnm(5)s(2)U) at tRNA wobble positions.</text>
</comment>
<comment type="subunit">
    <text evidence="1">Heterohexamer, formed by a dimer of trimers. The hexameric TusBCD complex contains 2 copies each of TusB, TusC and TusD. The TusBCD complex interacts with TusE.</text>
</comment>
<comment type="subcellular location">
    <subcellularLocation>
        <location evidence="1">Cytoplasm</location>
    </subcellularLocation>
</comment>
<comment type="similarity">
    <text evidence="1">Belongs to the DsrH/TusB family.</text>
</comment>
<keyword id="KW-0963">Cytoplasm</keyword>
<keyword id="KW-1185">Reference proteome</keyword>
<keyword id="KW-0819">tRNA processing</keyword>
<reference key="1">
    <citation type="journal article" date="2003" name="Proc. Natl. Acad. Sci. U.S.A.">
        <title>Reductive genome evolution in Buchnera aphidicola.</title>
        <authorList>
            <person name="van Ham R.C.H.J."/>
            <person name="Kamerbeek J."/>
            <person name="Palacios C."/>
            <person name="Rausell C."/>
            <person name="Abascal F."/>
            <person name="Bastolla U."/>
            <person name="Fernandez J.M."/>
            <person name="Jimenez L."/>
            <person name="Postigo M."/>
            <person name="Silva F.J."/>
            <person name="Tamames J."/>
            <person name="Viguera E."/>
            <person name="Latorre A."/>
            <person name="Valencia A."/>
            <person name="Moran F."/>
            <person name="Moya A."/>
        </authorList>
    </citation>
    <scope>NUCLEOTIDE SEQUENCE [LARGE SCALE GENOMIC DNA]</scope>
    <source>
        <strain>Bp</strain>
    </source>
</reference>
<organism>
    <name type="scientific">Buchnera aphidicola subsp. Baizongia pistaciae (strain Bp)</name>
    <dbReference type="NCBI Taxonomy" id="224915"/>
    <lineage>
        <taxon>Bacteria</taxon>
        <taxon>Pseudomonadati</taxon>
        <taxon>Pseudomonadota</taxon>
        <taxon>Gammaproteobacteria</taxon>
        <taxon>Enterobacterales</taxon>
        <taxon>Erwiniaceae</taxon>
        <taxon>Buchnera</taxon>
    </lineage>
</organism>
<sequence length="95" mass="10947">MLHILMRSPFETNMVLLMNMLESVDDILMLQNSVVLALKNNVFLNKILSYSVSMYALKQDLCARGILDNISPNVNVIGYNRFVDLTVKHKQQMSW</sequence>
<feature type="chain" id="PRO_0000216261" description="Protein TusB">
    <location>
        <begin position="1"/>
        <end position="95"/>
    </location>
</feature>